<comment type="function">
    <text evidence="1">The heterodimer acts as both an ATP-dependent DNA helicase and an ATP-dependent, dual-direction single-stranded exonuclease. Recognizes the chi site generating a DNA molecule suitable for the initiation of homologous recombination. The AddA nuclease domain is required for chi fragment generation; this subunit has the helicase and 3' -&gt; 5' nuclease activities.</text>
</comment>
<comment type="catalytic activity">
    <reaction evidence="1">
        <text>Couples ATP hydrolysis with the unwinding of duplex DNA by translocating in the 3'-5' direction.</text>
        <dbReference type="EC" id="5.6.2.4"/>
    </reaction>
</comment>
<comment type="catalytic activity">
    <reaction evidence="1">
        <text>ATP + H2O = ADP + phosphate + H(+)</text>
        <dbReference type="Rhea" id="RHEA:13065"/>
        <dbReference type="ChEBI" id="CHEBI:15377"/>
        <dbReference type="ChEBI" id="CHEBI:15378"/>
        <dbReference type="ChEBI" id="CHEBI:30616"/>
        <dbReference type="ChEBI" id="CHEBI:43474"/>
        <dbReference type="ChEBI" id="CHEBI:456216"/>
        <dbReference type="EC" id="5.6.2.4"/>
    </reaction>
</comment>
<comment type="cofactor">
    <cofactor evidence="1">
        <name>Mg(2+)</name>
        <dbReference type="ChEBI" id="CHEBI:18420"/>
    </cofactor>
</comment>
<comment type="subunit">
    <text evidence="1">Heterodimer of AddA and AddB/RexB.</text>
</comment>
<comment type="similarity">
    <text evidence="1">Belongs to the helicase family. AddA subfamily.</text>
</comment>
<feature type="chain" id="PRO_0000379238" description="ATP-dependent helicase/nuclease subunit A">
    <location>
        <begin position="1"/>
        <end position="1241"/>
    </location>
</feature>
<feature type="domain" description="UvrD-like helicase ATP-binding" evidence="1">
    <location>
        <begin position="12"/>
        <end position="485"/>
    </location>
</feature>
<feature type="domain" description="UvrD-like helicase C-terminal" evidence="1">
    <location>
        <begin position="505"/>
        <end position="805"/>
    </location>
</feature>
<feature type="binding site" evidence="1">
    <location>
        <begin position="33"/>
        <end position="40"/>
    </location>
    <ligand>
        <name>ATP</name>
        <dbReference type="ChEBI" id="CHEBI:30616"/>
    </ligand>
</feature>
<dbReference type="EC" id="3.1.-.-" evidence="1"/>
<dbReference type="EC" id="5.6.2.4" evidence="1"/>
<dbReference type="EMBL" id="CP000227">
    <property type="protein sequence ID" value="ACM11631.1"/>
    <property type="molecule type" value="Genomic_DNA"/>
</dbReference>
<dbReference type="SMR" id="B9ITE9"/>
<dbReference type="KEGG" id="bcq:BCQ_1201"/>
<dbReference type="HOGENOM" id="CLU_001114_3_1_9"/>
<dbReference type="Proteomes" id="UP000000441">
    <property type="component" value="Chromosome"/>
</dbReference>
<dbReference type="GO" id="GO:0005829">
    <property type="term" value="C:cytosol"/>
    <property type="evidence" value="ECO:0007669"/>
    <property type="project" value="TreeGrafter"/>
</dbReference>
<dbReference type="GO" id="GO:0033202">
    <property type="term" value="C:DNA helicase complex"/>
    <property type="evidence" value="ECO:0007669"/>
    <property type="project" value="TreeGrafter"/>
</dbReference>
<dbReference type="GO" id="GO:0043138">
    <property type="term" value="F:3'-5' DNA helicase activity"/>
    <property type="evidence" value="ECO:0007669"/>
    <property type="project" value="UniProtKB-UniRule"/>
</dbReference>
<dbReference type="GO" id="GO:0008408">
    <property type="term" value="F:3'-5' exonuclease activity"/>
    <property type="evidence" value="ECO:0007669"/>
    <property type="project" value="UniProtKB-UniRule"/>
</dbReference>
<dbReference type="GO" id="GO:0005524">
    <property type="term" value="F:ATP binding"/>
    <property type="evidence" value="ECO:0007669"/>
    <property type="project" value="UniProtKB-UniRule"/>
</dbReference>
<dbReference type="GO" id="GO:0016887">
    <property type="term" value="F:ATP hydrolysis activity"/>
    <property type="evidence" value="ECO:0007669"/>
    <property type="project" value="RHEA"/>
</dbReference>
<dbReference type="GO" id="GO:0003690">
    <property type="term" value="F:double-stranded DNA binding"/>
    <property type="evidence" value="ECO:0007669"/>
    <property type="project" value="UniProtKB-UniRule"/>
</dbReference>
<dbReference type="GO" id="GO:0000724">
    <property type="term" value="P:double-strand break repair via homologous recombination"/>
    <property type="evidence" value="ECO:0007669"/>
    <property type="project" value="UniProtKB-UniRule"/>
</dbReference>
<dbReference type="CDD" id="cd18807">
    <property type="entry name" value="SF1_C_UvrD"/>
    <property type="match status" value="1"/>
</dbReference>
<dbReference type="FunFam" id="3.40.50.300:FF:001164">
    <property type="entry name" value="ATP-dependent helicase/nuclease subunit A"/>
    <property type="match status" value="1"/>
</dbReference>
<dbReference type="FunFam" id="3.40.50.300:FF:001187">
    <property type="entry name" value="ATP-dependent helicase/nuclease subunit A"/>
    <property type="match status" value="1"/>
</dbReference>
<dbReference type="FunFam" id="3.40.50.300:FF:001196">
    <property type="entry name" value="ATP-dependent helicase/nuclease subunit A"/>
    <property type="match status" value="1"/>
</dbReference>
<dbReference type="FunFam" id="3.40.50.300:FF:001236">
    <property type="entry name" value="ATP-dependent helicase/nuclease subunit A"/>
    <property type="match status" value="1"/>
</dbReference>
<dbReference type="Gene3D" id="3.90.320.10">
    <property type="match status" value="1"/>
</dbReference>
<dbReference type="Gene3D" id="3.40.50.300">
    <property type="entry name" value="P-loop containing nucleotide triphosphate hydrolases"/>
    <property type="match status" value="4"/>
</dbReference>
<dbReference type="HAMAP" id="MF_01451">
    <property type="entry name" value="AddA"/>
    <property type="match status" value="1"/>
</dbReference>
<dbReference type="InterPro" id="IPR014152">
    <property type="entry name" value="AddA"/>
</dbReference>
<dbReference type="InterPro" id="IPR014017">
    <property type="entry name" value="DNA_helicase_UvrD-like_C"/>
</dbReference>
<dbReference type="InterPro" id="IPR000212">
    <property type="entry name" value="DNA_helicase_UvrD/REP"/>
</dbReference>
<dbReference type="InterPro" id="IPR027417">
    <property type="entry name" value="P-loop_NTPase"/>
</dbReference>
<dbReference type="InterPro" id="IPR011604">
    <property type="entry name" value="PDDEXK-like_dom_sf"/>
</dbReference>
<dbReference type="InterPro" id="IPR038726">
    <property type="entry name" value="PDDEXK_AddAB-type"/>
</dbReference>
<dbReference type="InterPro" id="IPR011335">
    <property type="entry name" value="Restrct_endonuc-II-like"/>
</dbReference>
<dbReference type="InterPro" id="IPR014016">
    <property type="entry name" value="UvrD-like_ATP-bd"/>
</dbReference>
<dbReference type="NCBIfam" id="TIGR02785">
    <property type="entry name" value="addA_Gpos"/>
    <property type="match status" value="1"/>
</dbReference>
<dbReference type="PANTHER" id="PTHR11070:SF48">
    <property type="entry name" value="ATP-DEPENDENT HELICASE_NUCLEASE SUBUNIT A"/>
    <property type="match status" value="1"/>
</dbReference>
<dbReference type="PANTHER" id="PTHR11070">
    <property type="entry name" value="UVRD / RECB / PCRA DNA HELICASE FAMILY MEMBER"/>
    <property type="match status" value="1"/>
</dbReference>
<dbReference type="Pfam" id="PF12705">
    <property type="entry name" value="PDDEXK_1"/>
    <property type="match status" value="1"/>
</dbReference>
<dbReference type="Pfam" id="PF00580">
    <property type="entry name" value="UvrD-helicase"/>
    <property type="match status" value="1"/>
</dbReference>
<dbReference type="Pfam" id="PF13361">
    <property type="entry name" value="UvrD_C"/>
    <property type="match status" value="1"/>
</dbReference>
<dbReference type="SUPFAM" id="SSF52540">
    <property type="entry name" value="P-loop containing nucleoside triphosphate hydrolases"/>
    <property type="match status" value="1"/>
</dbReference>
<dbReference type="SUPFAM" id="SSF52980">
    <property type="entry name" value="Restriction endonuclease-like"/>
    <property type="match status" value="1"/>
</dbReference>
<dbReference type="PROSITE" id="PS51198">
    <property type="entry name" value="UVRD_HELICASE_ATP_BIND"/>
    <property type="match status" value="1"/>
</dbReference>
<dbReference type="PROSITE" id="PS51217">
    <property type="entry name" value="UVRD_HELICASE_CTER"/>
    <property type="match status" value="1"/>
</dbReference>
<organism>
    <name type="scientific">Bacillus cereus (strain Q1)</name>
    <dbReference type="NCBI Taxonomy" id="361100"/>
    <lineage>
        <taxon>Bacteria</taxon>
        <taxon>Bacillati</taxon>
        <taxon>Bacillota</taxon>
        <taxon>Bacilli</taxon>
        <taxon>Bacillales</taxon>
        <taxon>Bacillaceae</taxon>
        <taxon>Bacillus</taxon>
        <taxon>Bacillus cereus group</taxon>
    </lineage>
</organism>
<protein>
    <recommendedName>
        <fullName evidence="1">ATP-dependent helicase/nuclease subunit A</fullName>
        <ecNumber evidence="1">3.1.-.-</ecNumber>
        <ecNumber evidence="1">5.6.2.4</ecNumber>
    </recommendedName>
    <alternativeName>
        <fullName evidence="1">ATP-dependent helicase/nuclease AddA</fullName>
    </alternativeName>
    <alternativeName>
        <fullName evidence="1">DNA 3'-5' helicase AddA</fullName>
    </alternativeName>
</protein>
<sequence length="1241" mass="142759">MIENWPKKPEGSQWTDDQWKAVVANGRDILVAAAAGSGKTAVLVERIIKKIINEENPVDVDRLLVVTFTNAAAQEMKNRIGEALEKVLIDEPGSQHIRKQLSLLNKASISTIHSFCLQVIRGYYYMLDVDPRFRIANQTENELLKEEVLDDILEEEYGIEDNTIFFELVDRYTSDRSDDDLQRMILALHTESRAHPNPEKWLDKLVEAYDVEGKTIEDLVYASYLLEDVKFQLETAEQHIRKATELAMLPDGPAPRVETLQADLALLGTLSSAARESWTSVYEAMQNVSWQTLKRIKKSDYNEDVVKQVDSLRNKAKDEVKKLQEELFSRKPESFLRDFQDMHPVLEKLVQLVKVFTERFQAMKRDKGMVDFTDLEHFCLQILSEQSEEGEMKPSAVALQYRNKFAEVLVDEYQDTNFVQESIIKFVTKDSESEGNLFMVGDVKQSIYRFRLAEPGLFLGKYKRFTQEGLGGGMKIDLAKNFRSRHEVLAGTNFIFKQIMGEEVGEIDYDADAELKLGASYPEGEDVAAELLCIQQTEEEVIDGEEGAEVEKAQLEARLMAQRIKAMVDSGYEVYDRKTDSMRPVQYRDFVILLRSMPWAPQIMEELKLQGIPVYADLATGYFEATEVNIMMNVFRVIDNPMQDIPLAAVLRSPIVGLNDEELATLRAHGKKGSFYEVMSSFLKGAPLEEEKELHDKLEWFYNLLQGWREFARQQSLSDLIWKVYGETGYYDFVGGLPAGKQRQANLRVLYDRARQYEATSFRGLFRFLRFIERILERGDDMGTARALGEQEDVVRIMTIHKSKGLEFPVVFVAGLGRRFNTQDLMKRFLLHKDFGFGSQFIDPRKRIKYTTLSQLAIKRKMKMELIAEEMRVLYVALTRAKEKLILIGTVKDATKEMEKWLDAREHSEWLLPDHIRAGASCYLDWIAPSLYRHRDSEILLELGQGSVPDEIYGYDTSWKVEVVDGNTLLAPEPVQEEKQELLEALREKKAVPLESERKEEVYDRLMWKYGYEEATSHRAKQSVTEIKRNYQSEEGSDNAFIKKLRAPIRTRPRFMEKKGLTYAERGTAVHAVMQHVDLKKPITEEVIREQIAGMVNKELLTFEQAEEIAIEKVISFFDSDLGKRVLAAKSVEREVPFTMMLAAEEAYQDWQGQSGESILVQGVIDCMIEEEDGITLIDFKTDTIEGKFPGGFEQAKPILEERYKVQLSLYAKALEKSLQHPVKEKCLYFFDGNHVVKIEE</sequence>
<keyword id="KW-0067">ATP-binding</keyword>
<keyword id="KW-0227">DNA damage</keyword>
<keyword id="KW-0234">DNA repair</keyword>
<keyword id="KW-0238">DNA-binding</keyword>
<keyword id="KW-0269">Exonuclease</keyword>
<keyword id="KW-0347">Helicase</keyword>
<keyword id="KW-0378">Hydrolase</keyword>
<keyword id="KW-0413">Isomerase</keyword>
<keyword id="KW-0540">Nuclease</keyword>
<keyword id="KW-0547">Nucleotide-binding</keyword>
<accession>B9ITE9</accession>
<name>ADDA_BACCQ</name>
<gene>
    <name evidence="1" type="primary">addA</name>
    <name type="ordered locus">BCQ_1201</name>
</gene>
<evidence type="ECO:0000255" key="1">
    <source>
        <dbReference type="HAMAP-Rule" id="MF_01451"/>
    </source>
</evidence>
<proteinExistence type="inferred from homology"/>
<reference key="1">
    <citation type="journal article" date="2009" name="J. Bacteriol.">
        <title>Complete genome sequence of the extremophilic Bacillus cereus strain Q1 with industrial applications.</title>
        <authorList>
            <person name="Xiong Z."/>
            <person name="Jiang Y."/>
            <person name="Qi D."/>
            <person name="Lu H."/>
            <person name="Yang F."/>
            <person name="Yang J."/>
            <person name="Chen L."/>
            <person name="Sun L."/>
            <person name="Xu X."/>
            <person name="Xue Y."/>
            <person name="Zhu Y."/>
            <person name="Jin Q."/>
        </authorList>
    </citation>
    <scope>NUCLEOTIDE SEQUENCE [LARGE SCALE GENOMIC DNA]</scope>
    <source>
        <strain>Q1</strain>
    </source>
</reference>